<proteinExistence type="inferred from homology"/>
<sequence>MSDAVGGVYPRVDMSGGTNVFPDMERQVLEYWKDDETFKASLTNREENPEYVFYDGPPFANGLPHYGHLLTGYVKDIVPRYQTMKGKLVNRVFGWDCHGLPAELEAEKQLGIKDKGEIEAMGLESFNNYCAKSVLEYTQEWKDYVTRQARWVDFDNGYKTMDMDFMESVMWAFKTLYDKGLIYQGFRVLPYSWAEHTPLSNQETRLDDSYKMRQDPTLTVTFPITGVKDDSAADASLVGAYALAWTTTPWTLPSNLALAVNPQVNYVEVKVGDQGAEAIRGQRVLLAEALVGAYAKELGEDHEVLTVRPGSELVGLTYQPIFSYFADHENAFQILAAEYVTTEDGTGIVHQAPAFGEDDMNTCKEYGIEVVIPVDMDGKFTSLVPEYQGQLVFDANKSIIADLKAAGRVVRHQTIEHSYPHSWRSGEPLIYMALPSWFVEVTKIRDRMVELNKEIDWMPSHIRDGQFGKWLEGARDWNISRNRYWGSPIPVWVSDDENYPRVDVYGSLEELERDFGVRPESLHRPHIDELTRPNPDDPTGKSTMRRVPEVLDCWFESGSMPFAQKHYPFENKDWFDTHSPADFIVEYSGQTRGWFYTLHVLATALFDRPAFKKVVAHGIVLGDDGTKMSKSRRNYPDVNEVFNRDGSDAMRWFLMSSPILRGGNLIVTEQGIREGVRQALLPMWNAYSFLQLYSSKPAQWSVDSSDVLDRYILAKLHDVVAAVGDALDNTDIARACDEVRTFCDALTNWYVRRSRDRFWAGDTEHPEAFYTLYTVLETLTRVTAPLLPMVSEVIWRGLTGERSVHLADFPQADQFPADDDLVRAMDEVRGVCSATSSVRKAHKLRNRLPLPKVTVALPESARLADFADIIRDEVNVKEVALTSDVDSVGRFDVVVNAKVAGPRLCKDVQRAIKAVKSGNYERRGDTVVADGIELVAGEFTERLVAADPDSTTQIDGVDGLVVLDMTLTEELEAEGWAADVIRGLQDARKASGFEVSDRIEVKLVVPEEKKEWALRHTDMIAGEVLATSFEVVTGEPAEHDIVAGVTATVQKV</sequence>
<reference key="1">
    <citation type="journal article" date="2003" name="Nucleic Acids Res.">
        <title>The complete genome sequence and analysis of Corynebacterium diphtheriae NCTC13129.</title>
        <authorList>
            <person name="Cerdeno-Tarraga A.-M."/>
            <person name="Efstratiou A."/>
            <person name="Dover L.G."/>
            <person name="Holden M.T.G."/>
            <person name="Pallen M.J."/>
            <person name="Bentley S.D."/>
            <person name="Besra G.S."/>
            <person name="Churcher C.M."/>
            <person name="James K.D."/>
            <person name="De Zoysa A."/>
            <person name="Chillingworth T."/>
            <person name="Cronin A."/>
            <person name="Dowd L."/>
            <person name="Feltwell T."/>
            <person name="Hamlin N."/>
            <person name="Holroyd S."/>
            <person name="Jagels K."/>
            <person name="Moule S."/>
            <person name="Quail M.A."/>
            <person name="Rabbinowitsch E."/>
            <person name="Rutherford K.M."/>
            <person name="Thomson N.R."/>
            <person name="Unwin L."/>
            <person name="Whitehead S."/>
            <person name="Barrell B.G."/>
            <person name="Parkhill J."/>
        </authorList>
    </citation>
    <scope>NUCLEOTIDE SEQUENCE [LARGE SCALE GENOMIC DNA]</scope>
    <source>
        <strain>ATCC 700971 / NCTC 13129 / Biotype gravis</strain>
    </source>
</reference>
<name>SYI_CORDI</name>
<dbReference type="EC" id="6.1.1.5" evidence="1"/>
<dbReference type="EMBL" id="BX248358">
    <property type="protein sequence ID" value="CAE50114.1"/>
    <property type="molecule type" value="Genomic_DNA"/>
</dbReference>
<dbReference type="RefSeq" id="WP_010935178.1">
    <property type="nucleotide sequence ID" value="NC_002935.2"/>
</dbReference>
<dbReference type="SMR" id="Q6NGD7"/>
<dbReference type="STRING" id="257309.DIP1589"/>
<dbReference type="KEGG" id="cdi:DIP1589"/>
<dbReference type="PATRIC" id="fig|257309.4.peg.1570"/>
<dbReference type="HOGENOM" id="CLU_001493_1_1_11"/>
<dbReference type="Proteomes" id="UP000002198">
    <property type="component" value="Chromosome"/>
</dbReference>
<dbReference type="GO" id="GO:0005737">
    <property type="term" value="C:cytoplasm"/>
    <property type="evidence" value="ECO:0007669"/>
    <property type="project" value="UniProtKB-SubCell"/>
</dbReference>
<dbReference type="GO" id="GO:0002161">
    <property type="term" value="F:aminoacyl-tRNA deacylase activity"/>
    <property type="evidence" value="ECO:0007669"/>
    <property type="project" value="InterPro"/>
</dbReference>
<dbReference type="GO" id="GO:0005524">
    <property type="term" value="F:ATP binding"/>
    <property type="evidence" value="ECO:0007669"/>
    <property type="project" value="UniProtKB-UniRule"/>
</dbReference>
<dbReference type="GO" id="GO:0004822">
    <property type="term" value="F:isoleucine-tRNA ligase activity"/>
    <property type="evidence" value="ECO:0007669"/>
    <property type="project" value="UniProtKB-UniRule"/>
</dbReference>
<dbReference type="GO" id="GO:0000049">
    <property type="term" value="F:tRNA binding"/>
    <property type="evidence" value="ECO:0007669"/>
    <property type="project" value="InterPro"/>
</dbReference>
<dbReference type="GO" id="GO:0008270">
    <property type="term" value="F:zinc ion binding"/>
    <property type="evidence" value="ECO:0007669"/>
    <property type="project" value="UniProtKB-UniRule"/>
</dbReference>
<dbReference type="GO" id="GO:0006428">
    <property type="term" value="P:isoleucyl-tRNA aminoacylation"/>
    <property type="evidence" value="ECO:0007669"/>
    <property type="project" value="UniProtKB-UniRule"/>
</dbReference>
<dbReference type="CDD" id="cd07961">
    <property type="entry name" value="Anticodon_Ia_Ile_ABEc"/>
    <property type="match status" value="1"/>
</dbReference>
<dbReference type="CDD" id="cd00818">
    <property type="entry name" value="IleRS_core"/>
    <property type="match status" value="1"/>
</dbReference>
<dbReference type="FunFam" id="3.40.50.620:FF:000063">
    <property type="entry name" value="Isoleucine--tRNA ligase"/>
    <property type="match status" value="1"/>
</dbReference>
<dbReference type="FunFam" id="3.40.50.620:FF:000075">
    <property type="entry name" value="Isoleucine--tRNA ligase"/>
    <property type="match status" value="1"/>
</dbReference>
<dbReference type="Gene3D" id="3.40.50.620">
    <property type="entry name" value="HUPs"/>
    <property type="match status" value="2"/>
</dbReference>
<dbReference type="Gene3D" id="1.10.730.10">
    <property type="entry name" value="Isoleucyl-tRNA Synthetase, Domain 1"/>
    <property type="match status" value="1"/>
</dbReference>
<dbReference type="HAMAP" id="MF_02003">
    <property type="entry name" value="Ile_tRNA_synth_type2"/>
    <property type="match status" value="1"/>
</dbReference>
<dbReference type="InterPro" id="IPR001412">
    <property type="entry name" value="aa-tRNA-synth_I_CS"/>
</dbReference>
<dbReference type="InterPro" id="IPR002300">
    <property type="entry name" value="aa-tRNA-synth_Ia"/>
</dbReference>
<dbReference type="InterPro" id="IPR033709">
    <property type="entry name" value="Anticodon_Ile_ABEc"/>
</dbReference>
<dbReference type="InterPro" id="IPR002301">
    <property type="entry name" value="Ile-tRNA-ligase"/>
</dbReference>
<dbReference type="InterPro" id="IPR023586">
    <property type="entry name" value="Ile-tRNA-ligase_type2"/>
</dbReference>
<dbReference type="InterPro" id="IPR013155">
    <property type="entry name" value="M/V/L/I-tRNA-synth_anticd-bd"/>
</dbReference>
<dbReference type="InterPro" id="IPR014729">
    <property type="entry name" value="Rossmann-like_a/b/a_fold"/>
</dbReference>
<dbReference type="InterPro" id="IPR009080">
    <property type="entry name" value="tRNAsynth_Ia_anticodon-bd"/>
</dbReference>
<dbReference type="InterPro" id="IPR009008">
    <property type="entry name" value="Val/Leu/Ile-tRNA-synth_edit"/>
</dbReference>
<dbReference type="NCBIfam" id="TIGR00392">
    <property type="entry name" value="ileS"/>
    <property type="match status" value="1"/>
</dbReference>
<dbReference type="PANTHER" id="PTHR42780:SF1">
    <property type="entry name" value="ISOLEUCINE--TRNA LIGASE, CYTOPLASMIC"/>
    <property type="match status" value="1"/>
</dbReference>
<dbReference type="PANTHER" id="PTHR42780">
    <property type="entry name" value="SOLEUCYL-TRNA SYNTHETASE"/>
    <property type="match status" value="1"/>
</dbReference>
<dbReference type="Pfam" id="PF08264">
    <property type="entry name" value="Anticodon_1"/>
    <property type="match status" value="1"/>
</dbReference>
<dbReference type="Pfam" id="PF19302">
    <property type="entry name" value="DUF5915"/>
    <property type="match status" value="1"/>
</dbReference>
<dbReference type="Pfam" id="PF00133">
    <property type="entry name" value="tRNA-synt_1"/>
    <property type="match status" value="1"/>
</dbReference>
<dbReference type="PRINTS" id="PR00984">
    <property type="entry name" value="TRNASYNTHILE"/>
</dbReference>
<dbReference type="SUPFAM" id="SSF47323">
    <property type="entry name" value="Anticodon-binding domain of a subclass of class I aminoacyl-tRNA synthetases"/>
    <property type="match status" value="2"/>
</dbReference>
<dbReference type="SUPFAM" id="SSF52374">
    <property type="entry name" value="Nucleotidylyl transferase"/>
    <property type="match status" value="1"/>
</dbReference>
<dbReference type="SUPFAM" id="SSF50677">
    <property type="entry name" value="ValRS/IleRS/LeuRS editing domain"/>
    <property type="match status" value="1"/>
</dbReference>
<dbReference type="PROSITE" id="PS00178">
    <property type="entry name" value="AA_TRNA_LIGASE_I"/>
    <property type="match status" value="1"/>
</dbReference>
<keyword id="KW-0030">Aminoacyl-tRNA synthetase</keyword>
<keyword id="KW-0067">ATP-binding</keyword>
<keyword id="KW-0963">Cytoplasm</keyword>
<keyword id="KW-0436">Ligase</keyword>
<keyword id="KW-0479">Metal-binding</keyword>
<keyword id="KW-0547">Nucleotide-binding</keyword>
<keyword id="KW-0648">Protein biosynthesis</keyword>
<keyword id="KW-1185">Reference proteome</keyword>
<keyword id="KW-0862">Zinc</keyword>
<evidence type="ECO:0000255" key="1">
    <source>
        <dbReference type="HAMAP-Rule" id="MF_02003"/>
    </source>
</evidence>
<comment type="function">
    <text evidence="1">Catalyzes the attachment of isoleucine to tRNA(Ile). As IleRS can inadvertently accommodate and process structurally similar amino acids such as valine, to avoid such errors it has two additional distinct tRNA(Ile)-dependent editing activities. One activity is designated as 'pretransfer' editing and involves the hydrolysis of activated Val-AMP. The other activity is designated 'posttransfer' editing and involves deacylation of mischarged Val-tRNA(Ile).</text>
</comment>
<comment type="catalytic activity">
    <reaction evidence="1">
        <text>tRNA(Ile) + L-isoleucine + ATP = L-isoleucyl-tRNA(Ile) + AMP + diphosphate</text>
        <dbReference type="Rhea" id="RHEA:11060"/>
        <dbReference type="Rhea" id="RHEA-COMP:9666"/>
        <dbReference type="Rhea" id="RHEA-COMP:9695"/>
        <dbReference type="ChEBI" id="CHEBI:30616"/>
        <dbReference type="ChEBI" id="CHEBI:33019"/>
        <dbReference type="ChEBI" id="CHEBI:58045"/>
        <dbReference type="ChEBI" id="CHEBI:78442"/>
        <dbReference type="ChEBI" id="CHEBI:78528"/>
        <dbReference type="ChEBI" id="CHEBI:456215"/>
        <dbReference type="EC" id="6.1.1.5"/>
    </reaction>
</comment>
<comment type="cofactor">
    <cofactor evidence="1">
        <name>Zn(2+)</name>
        <dbReference type="ChEBI" id="CHEBI:29105"/>
    </cofactor>
</comment>
<comment type="subunit">
    <text evidence="1">Monomer.</text>
</comment>
<comment type="subcellular location">
    <subcellularLocation>
        <location evidence="1">Cytoplasm</location>
    </subcellularLocation>
</comment>
<comment type="domain">
    <text evidence="1">IleRS has two distinct active sites: one for aminoacylation and one for editing. The misactivated valine is translocated from the active site to the editing site, which sterically excludes the correctly activated isoleucine. The single editing site contains two valyl binding pockets, one specific for each substrate (Val-AMP or Val-tRNA(Ile)).</text>
</comment>
<comment type="similarity">
    <text evidence="1">Belongs to the class-I aminoacyl-tRNA synthetase family. IleS type 2 subfamily.</text>
</comment>
<feature type="chain" id="PRO_0000098536" description="Isoleucine--tRNA ligase">
    <location>
        <begin position="1"/>
        <end position="1052"/>
    </location>
</feature>
<feature type="short sequence motif" description="'HIGH' region">
    <location>
        <begin position="58"/>
        <end position="68"/>
    </location>
</feature>
<feature type="short sequence motif" description="'KMSKS' region">
    <location>
        <begin position="627"/>
        <end position="631"/>
    </location>
</feature>
<feature type="binding site" evidence="1">
    <location>
        <position position="630"/>
    </location>
    <ligand>
        <name>ATP</name>
        <dbReference type="ChEBI" id="CHEBI:30616"/>
    </ligand>
</feature>
<gene>
    <name evidence="1" type="primary">ileS</name>
    <name type="ordered locus">DIP1589</name>
</gene>
<accession>Q6NGD7</accession>
<protein>
    <recommendedName>
        <fullName evidence="1">Isoleucine--tRNA ligase</fullName>
        <ecNumber evidence="1">6.1.1.5</ecNumber>
    </recommendedName>
    <alternativeName>
        <fullName evidence="1">Isoleucyl-tRNA synthetase</fullName>
        <shortName evidence="1">IleRS</shortName>
    </alternativeName>
</protein>
<organism>
    <name type="scientific">Corynebacterium diphtheriae (strain ATCC 700971 / NCTC 13129 / Biotype gravis)</name>
    <dbReference type="NCBI Taxonomy" id="257309"/>
    <lineage>
        <taxon>Bacteria</taxon>
        <taxon>Bacillati</taxon>
        <taxon>Actinomycetota</taxon>
        <taxon>Actinomycetes</taxon>
        <taxon>Mycobacteriales</taxon>
        <taxon>Corynebacteriaceae</taxon>
        <taxon>Corynebacterium</taxon>
    </lineage>
</organism>